<feature type="chain" id="PRO_0000120595" description="NAD kinase 1">
    <location>
        <begin position="1"/>
        <end position="265"/>
    </location>
</feature>
<feature type="active site" description="Proton acceptor" evidence="1">
    <location>
        <position position="45"/>
    </location>
</feature>
<feature type="binding site" evidence="1">
    <location>
        <begin position="45"/>
        <end position="46"/>
    </location>
    <ligand>
        <name>NAD(+)</name>
        <dbReference type="ChEBI" id="CHEBI:57540"/>
    </ligand>
</feature>
<feature type="binding site" evidence="1">
    <location>
        <position position="50"/>
    </location>
    <ligand>
        <name>NAD(+)</name>
        <dbReference type="ChEBI" id="CHEBI:57540"/>
    </ligand>
</feature>
<feature type="binding site" evidence="1">
    <location>
        <begin position="122"/>
        <end position="123"/>
    </location>
    <ligand>
        <name>NAD(+)</name>
        <dbReference type="ChEBI" id="CHEBI:57540"/>
    </ligand>
</feature>
<feature type="binding site" evidence="1">
    <location>
        <position position="148"/>
    </location>
    <ligand>
        <name>NAD(+)</name>
        <dbReference type="ChEBI" id="CHEBI:57540"/>
    </ligand>
</feature>
<feature type="binding site" evidence="1">
    <location>
        <position position="150"/>
    </location>
    <ligand>
        <name>NAD(+)</name>
        <dbReference type="ChEBI" id="CHEBI:57540"/>
    </ligand>
</feature>
<feature type="binding site" evidence="1">
    <location>
        <position position="185"/>
    </location>
    <ligand>
        <name>NAD(+)</name>
        <dbReference type="ChEBI" id="CHEBI:57540"/>
    </ligand>
</feature>
<comment type="function">
    <text evidence="1">Involved in the regulation of the intracellular balance of NAD and NADP, and is a key enzyme in the biosynthesis of NADP. Catalyzes specifically the phosphorylation on 2'-hydroxyl of the adenosine moiety of NAD to yield NADP.</text>
</comment>
<comment type="catalytic activity">
    <reaction evidence="1">
        <text>NAD(+) + ATP = ADP + NADP(+) + H(+)</text>
        <dbReference type="Rhea" id="RHEA:18629"/>
        <dbReference type="ChEBI" id="CHEBI:15378"/>
        <dbReference type="ChEBI" id="CHEBI:30616"/>
        <dbReference type="ChEBI" id="CHEBI:57540"/>
        <dbReference type="ChEBI" id="CHEBI:58349"/>
        <dbReference type="ChEBI" id="CHEBI:456216"/>
        <dbReference type="EC" id="2.7.1.23"/>
    </reaction>
</comment>
<comment type="cofactor">
    <cofactor evidence="1">
        <name>a divalent metal cation</name>
        <dbReference type="ChEBI" id="CHEBI:60240"/>
    </cofactor>
</comment>
<comment type="subcellular location">
    <subcellularLocation>
        <location evidence="1">Cytoplasm</location>
    </subcellularLocation>
</comment>
<comment type="similarity">
    <text evidence="1">Belongs to the NAD kinase family.</text>
</comment>
<accession>Q9K904</accession>
<sequence>MRFTVTSRGDDVSNTLQQKIKRYLLDFGLTLDEQEPDIVITVGGDGTLLHAFHRYTSRLEDTAFVGIHTGHLGFYADWVPDEVEKLVIHIAKTPYQIVEYPLLEVVVRHTDESESKRLLALNECTVKSQEGSLVSNVEIKGDVFEVFRGDGLCISTPSGSTAYNKALGGAILHPSLASIQISEMASINNRVYRTIGSPLVLPQHHTCLIKPLNQVELQVTIDHFTLAYKRVKSIQCRVAEEKIRFARFRPFPFWKRVKESFIGDS</sequence>
<dbReference type="EC" id="2.7.1.23" evidence="1"/>
<dbReference type="EMBL" id="BA000004">
    <property type="protein sequence ID" value="BAB06567.1"/>
    <property type="molecule type" value="Genomic_DNA"/>
</dbReference>
<dbReference type="PIR" id="H84005">
    <property type="entry name" value="H84005"/>
</dbReference>
<dbReference type="RefSeq" id="WP_010898995.1">
    <property type="nucleotide sequence ID" value="NC_002570.2"/>
</dbReference>
<dbReference type="SMR" id="Q9K904"/>
<dbReference type="STRING" id="272558.gene:10728758"/>
<dbReference type="KEGG" id="bha:BH2848"/>
<dbReference type="eggNOG" id="COG0061">
    <property type="taxonomic scope" value="Bacteria"/>
</dbReference>
<dbReference type="HOGENOM" id="CLU_008831_0_3_9"/>
<dbReference type="OrthoDB" id="9774737at2"/>
<dbReference type="Proteomes" id="UP000001258">
    <property type="component" value="Chromosome"/>
</dbReference>
<dbReference type="GO" id="GO:0005737">
    <property type="term" value="C:cytoplasm"/>
    <property type="evidence" value="ECO:0007669"/>
    <property type="project" value="UniProtKB-SubCell"/>
</dbReference>
<dbReference type="GO" id="GO:0005524">
    <property type="term" value="F:ATP binding"/>
    <property type="evidence" value="ECO:0007669"/>
    <property type="project" value="UniProtKB-KW"/>
</dbReference>
<dbReference type="GO" id="GO:0046872">
    <property type="term" value="F:metal ion binding"/>
    <property type="evidence" value="ECO:0007669"/>
    <property type="project" value="UniProtKB-UniRule"/>
</dbReference>
<dbReference type="GO" id="GO:0051287">
    <property type="term" value="F:NAD binding"/>
    <property type="evidence" value="ECO:0007669"/>
    <property type="project" value="UniProtKB-ARBA"/>
</dbReference>
<dbReference type="GO" id="GO:0003951">
    <property type="term" value="F:NAD+ kinase activity"/>
    <property type="evidence" value="ECO:0007669"/>
    <property type="project" value="UniProtKB-UniRule"/>
</dbReference>
<dbReference type="GO" id="GO:0019674">
    <property type="term" value="P:NAD metabolic process"/>
    <property type="evidence" value="ECO:0007669"/>
    <property type="project" value="InterPro"/>
</dbReference>
<dbReference type="GO" id="GO:0006741">
    <property type="term" value="P:NADP biosynthetic process"/>
    <property type="evidence" value="ECO:0007669"/>
    <property type="project" value="UniProtKB-UniRule"/>
</dbReference>
<dbReference type="FunFam" id="2.60.200.30:FF:000002">
    <property type="entry name" value="NAD kinase"/>
    <property type="match status" value="1"/>
</dbReference>
<dbReference type="Gene3D" id="3.40.50.10330">
    <property type="entry name" value="Probable inorganic polyphosphate/atp-NAD kinase, domain 1"/>
    <property type="match status" value="1"/>
</dbReference>
<dbReference type="Gene3D" id="2.60.200.30">
    <property type="entry name" value="Probable inorganic polyphosphate/atp-NAD kinase, domain 2"/>
    <property type="match status" value="1"/>
</dbReference>
<dbReference type="HAMAP" id="MF_00361">
    <property type="entry name" value="NAD_kinase"/>
    <property type="match status" value="1"/>
</dbReference>
<dbReference type="InterPro" id="IPR017438">
    <property type="entry name" value="ATP-NAD_kinase_N"/>
</dbReference>
<dbReference type="InterPro" id="IPR017437">
    <property type="entry name" value="ATP-NAD_kinase_PpnK-typ_C"/>
</dbReference>
<dbReference type="InterPro" id="IPR016064">
    <property type="entry name" value="NAD/diacylglycerol_kinase_sf"/>
</dbReference>
<dbReference type="InterPro" id="IPR002504">
    <property type="entry name" value="NADK"/>
</dbReference>
<dbReference type="NCBIfam" id="NF003424">
    <property type="entry name" value="PRK04885.1"/>
    <property type="match status" value="1"/>
</dbReference>
<dbReference type="PANTHER" id="PTHR20275">
    <property type="entry name" value="NAD KINASE"/>
    <property type="match status" value="1"/>
</dbReference>
<dbReference type="PANTHER" id="PTHR20275:SF0">
    <property type="entry name" value="NAD KINASE"/>
    <property type="match status" value="1"/>
</dbReference>
<dbReference type="Pfam" id="PF01513">
    <property type="entry name" value="NAD_kinase"/>
    <property type="match status" value="1"/>
</dbReference>
<dbReference type="Pfam" id="PF20143">
    <property type="entry name" value="NAD_kinase_C"/>
    <property type="match status" value="1"/>
</dbReference>
<dbReference type="SUPFAM" id="SSF111331">
    <property type="entry name" value="NAD kinase/diacylglycerol kinase-like"/>
    <property type="match status" value="1"/>
</dbReference>
<evidence type="ECO:0000255" key="1">
    <source>
        <dbReference type="HAMAP-Rule" id="MF_00361"/>
    </source>
</evidence>
<name>NADK1_HALH5</name>
<gene>
    <name evidence="1" type="primary">nadK1</name>
    <name type="ordered locus">BH2848</name>
</gene>
<protein>
    <recommendedName>
        <fullName evidence="1">NAD kinase 1</fullName>
        <ecNumber evidence="1">2.7.1.23</ecNumber>
    </recommendedName>
    <alternativeName>
        <fullName evidence="1">ATP-dependent NAD kinase 1</fullName>
    </alternativeName>
</protein>
<organism>
    <name type="scientific">Halalkalibacterium halodurans (strain ATCC BAA-125 / DSM 18197 / FERM 7344 / JCM 9153 / C-125)</name>
    <name type="common">Bacillus halodurans</name>
    <dbReference type="NCBI Taxonomy" id="272558"/>
    <lineage>
        <taxon>Bacteria</taxon>
        <taxon>Bacillati</taxon>
        <taxon>Bacillota</taxon>
        <taxon>Bacilli</taxon>
        <taxon>Bacillales</taxon>
        <taxon>Bacillaceae</taxon>
        <taxon>Halalkalibacterium (ex Joshi et al. 2022)</taxon>
    </lineage>
</organism>
<proteinExistence type="inferred from homology"/>
<reference key="1">
    <citation type="journal article" date="2000" name="Nucleic Acids Res.">
        <title>Complete genome sequence of the alkaliphilic bacterium Bacillus halodurans and genomic sequence comparison with Bacillus subtilis.</title>
        <authorList>
            <person name="Takami H."/>
            <person name="Nakasone K."/>
            <person name="Takaki Y."/>
            <person name="Maeno G."/>
            <person name="Sasaki R."/>
            <person name="Masui N."/>
            <person name="Fuji F."/>
            <person name="Hirama C."/>
            <person name="Nakamura Y."/>
            <person name="Ogasawara N."/>
            <person name="Kuhara S."/>
            <person name="Horikoshi K."/>
        </authorList>
    </citation>
    <scope>NUCLEOTIDE SEQUENCE [LARGE SCALE GENOMIC DNA]</scope>
    <source>
        <strain>ATCC BAA-125 / DSM 18197 / FERM 7344 / JCM 9153 / C-125</strain>
    </source>
</reference>
<keyword id="KW-0067">ATP-binding</keyword>
<keyword id="KW-0963">Cytoplasm</keyword>
<keyword id="KW-0418">Kinase</keyword>
<keyword id="KW-0520">NAD</keyword>
<keyword id="KW-0521">NADP</keyword>
<keyword id="KW-0547">Nucleotide-binding</keyword>
<keyword id="KW-1185">Reference proteome</keyword>
<keyword id="KW-0808">Transferase</keyword>